<protein>
    <recommendedName>
        <fullName evidence="1">Protein pelota homolog</fullName>
        <ecNumber evidence="1">3.1.-.-</ecNumber>
    </recommendedName>
</protein>
<sequence>MKILAVDTKRGLVRVVPETTDDIWLLSTVIQPGDLVRAKTLREIHFGDRGSGRSSRIPMVLTVRVEAVEFQAFTTRLRIRGIVIEGPEKYGVVGKYHTLSIEPGRELDIVKPSGWPQVLIEKLKRGSYNVAAVVVAVDYDDYAVAVVRGQGVKILASGGLHLPGKDDPTREDKLREAVTVIAKTTADVARRENALLVVAAGPGTVKNLVAEKLRGLVQGVKILVDNVSMGGEAGVFEEVRRGIMRQALQDAAVVEAERILEEFERRLAKEPGRIAYTLEQVYRAAEMGAVEELLILDETLHHPDPEVRARVDELLRLADATRAKIHFVSVESPVGYKVKALGGVIALLRYAINFAGETGG</sequence>
<keyword id="KW-0963">Cytoplasm</keyword>
<keyword id="KW-0255">Endonuclease</keyword>
<keyword id="KW-0378">Hydrolase</keyword>
<keyword id="KW-0479">Metal-binding</keyword>
<keyword id="KW-0540">Nuclease</keyword>
<keyword id="KW-1185">Reference proteome</keyword>
<proteinExistence type="inferred from homology"/>
<feature type="chain" id="PRO_0000361787" description="Protein pelota homolog">
    <location>
        <begin position="1"/>
        <end position="360"/>
    </location>
</feature>
<evidence type="ECO:0000255" key="1">
    <source>
        <dbReference type="HAMAP-Rule" id="MF_01853"/>
    </source>
</evidence>
<accession>A2BL82</accession>
<gene>
    <name evidence="1" type="primary">pelA</name>
    <name type="ordered locus">Hbut_0894</name>
</gene>
<reference key="1">
    <citation type="journal article" date="2007" name="Archaea">
        <title>The genome of Hyperthermus butylicus: a sulfur-reducing, peptide fermenting, neutrophilic Crenarchaeote growing up to 108 degrees C.</title>
        <authorList>
            <person name="Bruegger K."/>
            <person name="Chen L."/>
            <person name="Stark M."/>
            <person name="Zibat A."/>
            <person name="Redder P."/>
            <person name="Ruepp A."/>
            <person name="Awayez M."/>
            <person name="She Q."/>
            <person name="Garrett R.A."/>
            <person name="Klenk H.-P."/>
        </authorList>
    </citation>
    <scope>NUCLEOTIDE SEQUENCE [LARGE SCALE GENOMIC DNA]</scope>
    <source>
        <strain>DSM 5456 / JCM 9403 / PLM1-5</strain>
    </source>
</reference>
<dbReference type="EC" id="3.1.-.-" evidence="1"/>
<dbReference type="EMBL" id="CP000493">
    <property type="protein sequence ID" value="ABM80743.1"/>
    <property type="molecule type" value="Genomic_DNA"/>
</dbReference>
<dbReference type="RefSeq" id="WP_011822061.1">
    <property type="nucleotide sequence ID" value="NC_008818.1"/>
</dbReference>
<dbReference type="SMR" id="A2BL82"/>
<dbReference type="STRING" id="415426.Hbut_0894"/>
<dbReference type="EnsemblBacteria" id="ABM80743">
    <property type="protein sequence ID" value="ABM80743"/>
    <property type="gene ID" value="Hbut_0894"/>
</dbReference>
<dbReference type="GeneID" id="4781990"/>
<dbReference type="KEGG" id="hbu:Hbut_0894"/>
<dbReference type="eggNOG" id="arCOG01741">
    <property type="taxonomic scope" value="Archaea"/>
</dbReference>
<dbReference type="HOGENOM" id="CLU_023334_0_0_2"/>
<dbReference type="OrthoDB" id="31300at2157"/>
<dbReference type="Proteomes" id="UP000002593">
    <property type="component" value="Chromosome"/>
</dbReference>
<dbReference type="GO" id="GO:0005737">
    <property type="term" value="C:cytoplasm"/>
    <property type="evidence" value="ECO:0007669"/>
    <property type="project" value="UniProtKB-SubCell"/>
</dbReference>
<dbReference type="GO" id="GO:0004519">
    <property type="term" value="F:endonuclease activity"/>
    <property type="evidence" value="ECO:0007669"/>
    <property type="project" value="UniProtKB-UniRule"/>
</dbReference>
<dbReference type="GO" id="GO:0046872">
    <property type="term" value="F:metal ion binding"/>
    <property type="evidence" value="ECO:0007669"/>
    <property type="project" value="UniProtKB-UniRule"/>
</dbReference>
<dbReference type="GO" id="GO:0070651">
    <property type="term" value="P:nonfunctional rRNA decay"/>
    <property type="evidence" value="ECO:0007669"/>
    <property type="project" value="TreeGrafter"/>
</dbReference>
<dbReference type="GO" id="GO:0070966">
    <property type="term" value="P:nuclear-transcribed mRNA catabolic process, no-go decay"/>
    <property type="evidence" value="ECO:0007669"/>
    <property type="project" value="InterPro"/>
</dbReference>
<dbReference type="GO" id="GO:0070481">
    <property type="term" value="P:nuclear-transcribed mRNA catabolic process, non-stop decay"/>
    <property type="evidence" value="ECO:0007669"/>
    <property type="project" value="InterPro"/>
</dbReference>
<dbReference type="GO" id="GO:0032790">
    <property type="term" value="P:ribosome disassembly"/>
    <property type="evidence" value="ECO:0007669"/>
    <property type="project" value="TreeGrafter"/>
</dbReference>
<dbReference type="GO" id="GO:0071025">
    <property type="term" value="P:RNA surveillance"/>
    <property type="evidence" value="ECO:0007669"/>
    <property type="project" value="InterPro"/>
</dbReference>
<dbReference type="Gene3D" id="3.30.1330.30">
    <property type="match status" value="1"/>
</dbReference>
<dbReference type="Gene3D" id="3.30.420.60">
    <property type="entry name" value="eRF1 domain 2"/>
    <property type="match status" value="1"/>
</dbReference>
<dbReference type="Gene3D" id="2.30.30.870">
    <property type="entry name" value="Pelota, domain A"/>
    <property type="match status" value="1"/>
</dbReference>
<dbReference type="HAMAP" id="MF_01853">
    <property type="entry name" value="PelO"/>
    <property type="match status" value="1"/>
</dbReference>
<dbReference type="InterPro" id="IPR042226">
    <property type="entry name" value="eFR1_2_sf"/>
</dbReference>
<dbReference type="InterPro" id="IPR005140">
    <property type="entry name" value="eRF1_1_Pelota"/>
</dbReference>
<dbReference type="InterPro" id="IPR005142">
    <property type="entry name" value="eRF1_3"/>
</dbReference>
<dbReference type="InterPro" id="IPR038069">
    <property type="entry name" value="Pelota/DOM34_N"/>
</dbReference>
<dbReference type="InterPro" id="IPR023521">
    <property type="entry name" value="Pelota_arc"/>
</dbReference>
<dbReference type="InterPro" id="IPR029064">
    <property type="entry name" value="Ribosomal_eL30-like_sf"/>
</dbReference>
<dbReference type="InterPro" id="IPR004405">
    <property type="entry name" value="Transl-rel_pelota"/>
</dbReference>
<dbReference type="NCBIfam" id="TIGR00111">
    <property type="entry name" value="pelota"/>
    <property type="match status" value="1"/>
</dbReference>
<dbReference type="PANTHER" id="PTHR10853">
    <property type="entry name" value="PELOTA"/>
    <property type="match status" value="1"/>
</dbReference>
<dbReference type="PANTHER" id="PTHR10853:SF0">
    <property type="entry name" value="PROTEIN PELOTA HOMOLOG"/>
    <property type="match status" value="1"/>
</dbReference>
<dbReference type="Pfam" id="PF03463">
    <property type="entry name" value="eRF1_1"/>
    <property type="match status" value="1"/>
</dbReference>
<dbReference type="Pfam" id="PF03465">
    <property type="entry name" value="eRF1_3"/>
    <property type="match status" value="1"/>
</dbReference>
<dbReference type="SMART" id="SM01194">
    <property type="entry name" value="eRF1_1"/>
    <property type="match status" value="1"/>
</dbReference>
<dbReference type="SUPFAM" id="SSF159065">
    <property type="entry name" value="Dom34/Pelota N-terminal domain-like"/>
    <property type="match status" value="1"/>
</dbReference>
<dbReference type="SUPFAM" id="SSF55315">
    <property type="entry name" value="L30e-like"/>
    <property type="match status" value="1"/>
</dbReference>
<dbReference type="SUPFAM" id="SSF53137">
    <property type="entry name" value="Translational machinery components"/>
    <property type="match status" value="1"/>
</dbReference>
<organism>
    <name type="scientific">Hyperthermus butylicus (strain DSM 5456 / JCM 9403 / PLM1-5)</name>
    <dbReference type="NCBI Taxonomy" id="415426"/>
    <lineage>
        <taxon>Archaea</taxon>
        <taxon>Thermoproteota</taxon>
        <taxon>Thermoprotei</taxon>
        <taxon>Desulfurococcales</taxon>
        <taxon>Pyrodictiaceae</taxon>
        <taxon>Hyperthermus</taxon>
    </lineage>
</organism>
<name>PELO_HYPBU</name>
<comment type="function">
    <text evidence="1">May function in recognizing stalled ribosomes, interact with stem-loop structures in stalled mRNA molecules, and effect endonucleolytic cleavage of the mRNA. May play a role in the release non-functional ribosomes and degradation of damaged mRNAs. Has endoribonuclease activity.</text>
</comment>
<comment type="cofactor">
    <cofactor evidence="1">
        <name>a divalent metal cation</name>
        <dbReference type="ChEBI" id="CHEBI:60240"/>
    </cofactor>
</comment>
<comment type="subunit">
    <text evidence="1">Monomer.</text>
</comment>
<comment type="subcellular location">
    <subcellularLocation>
        <location evidence="1">Cytoplasm</location>
    </subcellularLocation>
</comment>
<comment type="domain">
    <text evidence="1">The N-terminal domain has the RNA-binding Sm fold. It harbors the endoribonuclease activity.</text>
</comment>
<comment type="similarity">
    <text evidence="1">Belongs to the eukaryotic release factor 1 family. Pelota subfamily.</text>
</comment>